<keyword id="KW-0028">Amino-acid biosynthesis</keyword>
<keyword id="KW-0963">Cytoplasm</keyword>
<keyword id="KW-0315">Glutamine amidotransferase</keyword>
<keyword id="KW-0368">Histidine biosynthesis</keyword>
<keyword id="KW-0378">Hydrolase</keyword>
<keyword id="KW-0456">Lyase</keyword>
<keyword id="KW-1185">Reference proteome</keyword>
<name>HIS5_THIDA</name>
<proteinExistence type="inferred from homology"/>
<evidence type="ECO:0000255" key="1">
    <source>
        <dbReference type="HAMAP-Rule" id="MF_00278"/>
    </source>
</evidence>
<gene>
    <name evidence="1" type="primary">hisH</name>
    <name type="ordered locus">Tbd_1710</name>
</gene>
<reference key="1">
    <citation type="journal article" date="2006" name="J. Bacteriol.">
        <title>The genome sequence of the obligately chemolithoautotrophic, facultatively anaerobic bacterium Thiobacillus denitrificans.</title>
        <authorList>
            <person name="Beller H.R."/>
            <person name="Chain P.S."/>
            <person name="Letain T.E."/>
            <person name="Chakicherla A."/>
            <person name="Larimer F.W."/>
            <person name="Richardson P.M."/>
            <person name="Coleman M.A."/>
            <person name="Wood A.P."/>
            <person name="Kelly D.P."/>
        </authorList>
    </citation>
    <scope>NUCLEOTIDE SEQUENCE [LARGE SCALE GENOMIC DNA]</scope>
    <source>
        <strain>ATCC 25259 / T1</strain>
    </source>
</reference>
<dbReference type="EC" id="4.3.2.10" evidence="1"/>
<dbReference type="EC" id="3.5.1.2" evidence="1"/>
<dbReference type="EMBL" id="CP000116">
    <property type="protein sequence ID" value="AAZ97663.1"/>
    <property type="molecule type" value="Genomic_DNA"/>
</dbReference>
<dbReference type="RefSeq" id="WP_011312222.1">
    <property type="nucleotide sequence ID" value="NC_007404.1"/>
</dbReference>
<dbReference type="SMR" id="Q3SEU6"/>
<dbReference type="STRING" id="292415.Tbd_1710"/>
<dbReference type="KEGG" id="tbd:Tbd_1710"/>
<dbReference type="eggNOG" id="COG0118">
    <property type="taxonomic scope" value="Bacteria"/>
</dbReference>
<dbReference type="HOGENOM" id="CLU_071837_2_0_4"/>
<dbReference type="OrthoDB" id="9807137at2"/>
<dbReference type="UniPathway" id="UPA00031">
    <property type="reaction ID" value="UER00010"/>
</dbReference>
<dbReference type="Proteomes" id="UP000008291">
    <property type="component" value="Chromosome"/>
</dbReference>
<dbReference type="GO" id="GO:0005737">
    <property type="term" value="C:cytoplasm"/>
    <property type="evidence" value="ECO:0007669"/>
    <property type="project" value="UniProtKB-SubCell"/>
</dbReference>
<dbReference type="GO" id="GO:0004359">
    <property type="term" value="F:glutaminase activity"/>
    <property type="evidence" value="ECO:0007669"/>
    <property type="project" value="UniProtKB-EC"/>
</dbReference>
<dbReference type="GO" id="GO:0000107">
    <property type="term" value="F:imidazoleglycerol-phosphate synthase activity"/>
    <property type="evidence" value="ECO:0007669"/>
    <property type="project" value="UniProtKB-UniRule"/>
</dbReference>
<dbReference type="GO" id="GO:0016829">
    <property type="term" value="F:lyase activity"/>
    <property type="evidence" value="ECO:0007669"/>
    <property type="project" value="UniProtKB-KW"/>
</dbReference>
<dbReference type="GO" id="GO:0000105">
    <property type="term" value="P:L-histidine biosynthetic process"/>
    <property type="evidence" value="ECO:0007669"/>
    <property type="project" value="UniProtKB-UniRule"/>
</dbReference>
<dbReference type="CDD" id="cd01748">
    <property type="entry name" value="GATase1_IGP_Synthase"/>
    <property type="match status" value="1"/>
</dbReference>
<dbReference type="Gene3D" id="3.40.50.880">
    <property type="match status" value="1"/>
</dbReference>
<dbReference type="HAMAP" id="MF_00278">
    <property type="entry name" value="HisH"/>
    <property type="match status" value="1"/>
</dbReference>
<dbReference type="InterPro" id="IPR029062">
    <property type="entry name" value="Class_I_gatase-like"/>
</dbReference>
<dbReference type="InterPro" id="IPR017926">
    <property type="entry name" value="GATASE"/>
</dbReference>
<dbReference type="InterPro" id="IPR010139">
    <property type="entry name" value="Imidazole-glycPsynth_HisH"/>
</dbReference>
<dbReference type="NCBIfam" id="TIGR01855">
    <property type="entry name" value="IMP_synth_hisH"/>
    <property type="match status" value="1"/>
</dbReference>
<dbReference type="PANTHER" id="PTHR42701">
    <property type="entry name" value="IMIDAZOLE GLYCEROL PHOSPHATE SYNTHASE SUBUNIT HISH"/>
    <property type="match status" value="1"/>
</dbReference>
<dbReference type="PANTHER" id="PTHR42701:SF2">
    <property type="entry name" value="IMIDAZOLE GLYCEROL PHOSPHATE SYNTHASE SUBUNIT HISH 1"/>
    <property type="match status" value="1"/>
</dbReference>
<dbReference type="Pfam" id="PF00117">
    <property type="entry name" value="GATase"/>
    <property type="match status" value="1"/>
</dbReference>
<dbReference type="PIRSF" id="PIRSF000495">
    <property type="entry name" value="Amidotransf_hisH"/>
    <property type="match status" value="1"/>
</dbReference>
<dbReference type="SUPFAM" id="SSF52317">
    <property type="entry name" value="Class I glutamine amidotransferase-like"/>
    <property type="match status" value="1"/>
</dbReference>
<dbReference type="PROSITE" id="PS51273">
    <property type="entry name" value="GATASE_TYPE_1"/>
    <property type="match status" value="1"/>
</dbReference>
<feature type="chain" id="PRO_0000231766" description="Imidazole glycerol phosphate synthase subunit HisH">
    <location>
        <begin position="1"/>
        <end position="228"/>
    </location>
</feature>
<feature type="domain" description="Glutamine amidotransferase type-1" evidence="1">
    <location>
        <begin position="4"/>
        <end position="218"/>
    </location>
</feature>
<feature type="active site" description="Nucleophile" evidence="1">
    <location>
        <position position="83"/>
    </location>
</feature>
<feature type="active site" evidence="1">
    <location>
        <position position="193"/>
    </location>
</feature>
<feature type="active site" evidence="1">
    <location>
        <position position="195"/>
    </location>
</feature>
<organism>
    <name type="scientific">Thiobacillus denitrificans (strain ATCC 25259 / T1)</name>
    <dbReference type="NCBI Taxonomy" id="292415"/>
    <lineage>
        <taxon>Bacteria</taxon>
        <taxon>Pseudomonadati</taxon>
        <taxon>Pseudomonadota</taxon>
        <taxon>Betaproteobacteria</taxon>
        <taxon>Nitrosomonadales</taxon>
        <taxon>Thiobacillaceae</taxon>
        <taxon>Thiobacillus</taxon>
    </lineage>
</organism>
<comment type="function">
    <text evidence="1">IGPS catalyzes the conversion of PRFAR and glutamine to IGP, AICAR and glutamate. The HisH subunit catalyzes the hydrolysis of glutamine to glutamate and ammonia as part of the synthesis of IGP and AICAR. The resulting ammonia molecule is channeled to the active site of HisF.</text>
</comment>
<comment type="catalytic activity">
    <reaction evidence="1">
        <text>5-[(5-phospho-1-deoxy-D-ribulos-1-ylimino)methylamino]-1-(5-phospho-beta-D-ribosyl)imidazole-4-carboxamide + L-glutamine = D-erythro-1-(imidazol-4-yl)glycerol 3-phosphate + 5-amino-1-(5-phospho-beta-D-ribosyl)imidazole-4-carboxamide + L-glutamate + H(+)</text>
        <dbReference type="Rhea" id="RHEA:24793"/>
        <dbReference type="ChEBI" id="CHEBI:15378"/>
        <dbReference type="ChEBI" id="CHEBI:29985"/>
        <dbReference type="ChEBI" id="CHEBI:58278"/>
        <dbReference type="ChEBI" id="CHEBI:58359"/>
        <dbReference type="ChEBI" id="CHEBI:58475"/>
        <dbReference type="ChEBI" id="CHEBI:58525"/>
        <dbReference type="EC" id="4.3.2.10"/>
    </reaction>
</comment>
<comment type="catalytic activity">
    <reaction evidence="1">
        <text>L-glutamine + H2O = L-glutamate + NH4(+)</text>
        <dbReference type="Rhea" id="RHEA:15889"/>
        <dbReference type="ChEBI" id="CHEBI:15377"/>
        <dbReference type="ChEBI" id="CHEBI:28938"/>
        <dbReference type="ChEBI" id="CHEBI:29985"/>
        <dbReference type="ChEBI" id="CHEBI:58359"/>
        <dbReference type="EC" id="3.5.1.2"/>
    </reaction>
</comment>
<comment type="pathway">
    <text evidence="1">Amino-acid biosynthesis; L-histidine biosynthesis; L-histidine from 5-phospho-alpha-D-ribose 1-diphosphate: step 5/9.</text>
</comment>
<comment type="subunit">
    <text evidence="1">Heterodimer of HisH and HisF.</text>
</comment>
<comment type="subcellular location">
    <subcellularLocation>
        <location evidence="1">Cytoplasm</location>
    </subcellularLocation>
</comment>
<sequence>MSVDIAVVDYGMGNLRSVSKAIEHVAPSATVVVTSSPDVIAEAGRVVFPGQGAARDCMREIDARGLREAIATAARSKPFLGICMGMQVLFEHSEEGDTACLGILPGNVQRFPHEAMHDDRGNKLKVPHMGWNNVHQGAPHPLWSGIEDGERFYFVHSYFVQPTTPDLIAGFSHYPFPFTCAVASGNIFAVQFHPEKSQNAGLTLLGNFVTWNPGEHASACDLSGASCA</sequence>
<protein>
    <recommendedName>
        <fullName evidence="1">Imidazole glycerol phosphate synthase subunit HisH</fullName>
        <ecNumber evidence="1">4.3.2.10</ecNumber>
    </recommendedName>
    <alternativeName>
        <fullName evidence="1">IGP synthase glutaminase subunit</fullName>
        <ecNumber evidence="1">3.5.1.2</ecNumber>
    </alternativeName>
    <alternativeName>
        <fullName evidence="1">IGP synthase subunit HisH</fullName>
    </alternativeName>
    <alternativeName>
        <fullName evidence="1">ImGP synthase subunit HisH</fullName>
        <shortName evidence="1">IGPS subunit HisH</shortName>
    </alternativeName>
</protein>
<accession>Q3SEU6</accession>